<gene>
    <name type="primary">cueO</name>
    <name type="ordered locus">YPO3409</name>
    <name type="ordered locus">y0777</name>
    <name type="ordered locus">YP_0276</name>
</gene>
<keyword id="KW-0186">Copper</keyword>
<keyword id="KW-0479">Metal-binding</keyword>
<keyword id="KW-0560">Oxidoreductase</keyword>
<keyword id="KW-0574">Periplasm</keyword>
<keyword id="KW-1185">Reference proteome</keyword>
<keyword id="KW-0677">Repeat</keyword>
<keyword id="KW-0732">Signal</keyword>
<feature type="signal peptide" description="Tat-type signal" evidence="3">
    <location>
        <begin position="1"/>
        <end position="28"/>
    </location>
</feature>
<feature type="chain" id="PRO_0000002955" description="Multicopper oxidase CueO">
    <location>
        <begin position="29"/>
        <end position="533"/>
    </location>
</feature>
<feature type="domain" description="Plastocyanin-like 1" evidence="2">
    <location>
        <begin position="53"/>
        <end position="166"/>
    </location>
</feature>
<feature type="domain" description="Plastocyanin-like 2" evidence="2">
    <location>
        <begin position="221"/>
        <end position="290"/>
    </location>
</feature>
<feature type="domain" description="Plastocyanin-like 3" evidence="2">
    <location>
        <begin position="416"/>
        <end position="532"/>
    </location>
</feature>
<feature type="binding site" description="type 2 copper site" evidence="1">
    <location>
        <position position="102"/>
    </location>
    <ligand>
        <name>Cu cation</name>
        <dbReference type="ChEBI" id="CHEBI:23378"/>
        <label>1</label>
    </ligand>
</feature>
<feature type="binding site" description="type 3 copper site" evidence="1">
    <location>
        <position position="104"/>
    </location>
    <ligand>
        <name>Cu cation</name>
        <dbReference type="ChEBI" id="CHEBI:23378"/>
        <label>2</label>
    </ligand>
</feature>
<feature type="binding site" description="type 3 copper site" evidence="1">
    <location>
        <position position="142"/>
    </location>
    <ligand>
        <name>Cu cation</name>
        <dbReference type="ChEBI" id="CHEBI:23378"/>
        <label>2</label>
    </ligand>
</feature>
<feature type="binding site" description="type 3 copper site" evidence="1">
    <location>
        <position position="144"/>
    </location>
    <ligand>
        <name>Cu cation</name>
        <dbReference type="ChEBI" id="CHEBI:23378"/>
        <label>3</label>
    </ligand>
</feature>
<feature type="binding site" description="type 1 copper site" evidence="1">
    <location>
        <position position="458"/>
    </location>
    <ligand>
        <name>Cu cation</name>
        <dbReference type="ChEBI" id="CHEBI:23378"/>
        <label>4</label>
    </ligand>
</feature>
<feature type="binding site" description="type 2 copper site" evidence="1">
    <location>
        <position position="461"/>
    </location>
    <ligand>
        <name>Cu cation</name>
        <dbReference type="ChEBI" id="CHEBI:23378"/>
        <label>1</label>
    </ligand>
</feature>
<feature type="binding site" description="type 3 copper site" evidence="1">
    <location>
        <position position="463"/>
    </location>
    <ligand>
        <name>Cu cation</name>
        <dbReference type="ChEBI" id="CHEBI:23378"/>
        <label>3</label>
    </ligand>
</feature>
<feature type="binding site" description="type 3 copper site" evidence="1">
    <location>
        <position position="514"/>
    </location>
    <ligand>
        <name>Cu cation</name>
        <dbReference type="ChEBI" id="CHEBI:23378"/>
        <label>3</label>
    </ligand>
</feature>
<feature type="binding site" description="type 1 copper site" evidence="1">
    <location>
        <position position="515"/>
    </location>
    <ligand>
        <name>Cu cation</name>
        <dbReference type="ChEBI" id="CHEBI:23378"/>
        <label>4</label>
    </ligand>
</feature>
<feature type="binding site" description="type 3 copper site" evidence="1">
    <location>
        <position position="516"/>
    </location>
    <ligand>
        <name>Cu cation</name>
        <dbReference type="ChEBI" id="CHEBI:23378"/>
        <label>2</label>
    </ligand>
</feature>
<feature type="binding site" description="type 1 copper site" evidence="1">
    <location>
        <position position="520"/>
    </location>
    <ligand>
        <name>Cu cation</name>
        <dbReference type="ChEBI" id="CHEBI:23378"/>
        <label>4</label>
    </ligand>
</feature>
<organism>
    <name type="scientific">Yersinia pestis</name>
    <dbReference type="NCBI Taxonomy" id="632"/>
    <lineage>
        <taxon>Bacteria</taxon>
        <taxon>Pseudomonadati</taxon>
        <taxon>Pseudomonadota</taxon>
        <taxon>Gammaproteobacteria</taxon>
        <taxon>Enterobacterales</taxon>
        <taxon>Yersiniaceae</taxon>
        <taxon>Yersinia</taxon>
    </lineage>
</organism>
<sequence length="533" mass="58328">MHRRDFLKLTAALGAATSLPLWSRAALAADFSPLPIPPLLQPDANGKINLNIQTGSVVWLPSTATQTWGYNGNLLGPAIRLQRGKAVTIDITNALPEATTVHWHGLEIPGEVDGGPQALIQPGAKRQVTFAVEQPAATCWFHPHTHSKTGHQVAMGLGGLVLIDDSDSETLPLPKQWGVDDIPVILQDKLLDKHGQVDYQLDVMTAAVGWFGDRMLTNGVPYPQQITPRGWVRLRLLNGCNARSLNLALSDGRPMYVIASDGGLLAEPVVVRELPILMGERFEVLVDTRDGQSLDLVTLPVTQMGMTLAPFDQPLPVLRIQPSLAIGSQVLPESLVVIPELADVTGVQERWFQLMMDPKLDMLGMQALVARYGMKAMAGMNMNHGDMGAMDHGNRPDMSQGKMKGMDHGTMNGAPAFNFSHANRINGKAFSMTEPAFDAKQGKYEKWTISGEGDMMLHPFHVHGTQFRILTENGKPPAEHRRGWKDIVRVEGARSEILVRFNYLAPASTPYMAHCHLLEHEDTGMMLGFTVSA</sequence>
<reference key="1">
    <citation type="journal article" date="2001" name="Nature">
        <title>Genome sequence of Yersinia pestis, the causative agent of plague.</title>
        <authorList>
            <person name="Parkhill J."/>
            <person name="Wren B.W."/>
            <person name="Thomson N.R."/>
            <person name="Titball R.W."/>
            <person name="Holden M.T.G."/>
            <person name="Prentice M.B."/>
            <person name="Sebaihia M."/>
            <person name="James K.D."/>
            <person name="Churcher C.M."/>
            <person name="Mungall K.L."/>
            <person name="Baker S."/>
            <person name="Basham D."/>
            <person name="Bentley S.D."/>
            <person name="Brooks K."/>
            <person name="Cerdeno-Tarraga A.-M."/>
            <person name="Chillingworth T."/>
            <person name="Cronin A."/>
            <person name="Davies R.M."/>
            <person name="Davis P."/>
            <person name="Dougan G."/>
            <person name="Feltwell T."/>
            <person name="Hamlin N."/>
            <person name="Holroyd S."/>
            <person name="Jagels K."/>
            <person name="Karlyshev A.V."/>
            <person name="Leather S."/>
            <person name="Moule S."/>
            <person name="Oyston P.C.F."/>
            <person name="Quail M.A."/>
            <person name="Rutherford K.M."/>
            <person name="Simmonds M."/>
            <person name="Skelton J."/>
            <person name="Stevens K."/>
            <person name="Whitehead S."/>
            <person name="Barrell B.G."/>
        </authorList>
    </citation>
    <scope>NUCLEOTIDE SEQUENCE [LARGE SCALE GENOMIC DNA]</scope>
    <source>
        <strain>CO-92 / Biovar Orientalis</strain>
    </source>
</reference>
<reference key="2">
    <citation type="journal article" date="2002" name="J. Bacteriol.">
        <title>Genome sequence of Yersinia pestis KIM.</title>
        <authorList>
            <person name="Deng W."/>
            <person name="Burland V."/>
            <person name="Plunkett G. III"/>
            <person name="Boutin A."/>
            <person name="Mayhew G.F."/>
            <person name="Liss P."/>
            <person name="Perna N.T."/>
            <person name="Rose D.J."/>
            <person name="Mau B."/>
            <person name="Zhou S."/>
            <person name="Schwartz D.C."/>
            <person name="Fetherston J.D."/>
            <person name="Lindler L.E."/>
            <person name="Brubaker R.R."/>
            <person name="Plano G.V."/>
            <person name="Straley S.C."/>
            <person name="McDonough K.A."/>
            <person name="Nilles M.L."/>
            <person name="Matson J.S."/>
            <person name="Blattner F.R."/>
            <person name="Perry R.D."/>
        </authorList>
    </citation>
    <scope>NUCLEOTIDE SEQUENCE [LARGE SCALE GENOMIC DNA]</scope>
    <source>
        <strain>KIM10+ / Biovar Mediaevalis</strain>
    </source>
</reference>
<reference key="3">
    <citation type="journal article" date="2004" name="DNA Res.">
        <title>Complete genome sequence of Yersinia pestis strain 91001, an isolate avirulent to humans.</title>
        <authorList>
            <person name="Song Y."/>
            <person name="Tong Z."/>
            <person name="Wang J."/>
            <person name="Wang L."/>
            <person name="Guo Z."/>
            <person name="Han Y."/>
            <person name="Zhang J."/>
            <person name="Pei D."/>
            <person name="Zhou D."/>
            <person name="Qin H."/>
            <person name="Pang X."/>
            <person name="Han Y."/>
            <person name="Zhai J."/>
            <person name="Li M."/>
            <person name="Cui B."/>
            <person name="Qi Z."/>
            <person name="Jin L."/>
            <person name="Dai R."/>
            <person name="Chen F."/>
            <person name="Li S."/>
            <person name="Ye C."/>
            <person name="Du Z."/>
            <person name="Lin W."/>
            <person name="Wang J."/>
            <person name="Yu J."/>
            <person name="Yang H."/>
            <person name="Wang J."/>
            <person name="Huang P."/>
            <person name="Yang R."/>
        </authorList>
    </citation>
    <scope>NUCLEOTIDE SEQUENCE [LARGE SCALE GENOMIC DNA]</scope>
    <source>
        <strain>91001 / Biovar Mediaevalis</strain>
    </source>
</reference>
<accession>Q8ZBK0</accession>
<accession>Q0WBN7</accession>
<protein>
    <recommendedName>
        <fullName evidence="1">Multicopper oxidase CueO</fullName>
        <shortName evidence="1">MCO</shortName>
        <ecNumber evidence="1">1.16.3.4</ecNumber>
    </recommendedName>
    <alternativeName>
        <fullName evidence="1">Copper efflux oxidase</fullName>
        <shortName evidence="1">Cu efflux oxidase</shortName>
    </alternativeName>
    <alternativeName>
        <fullName evidence="1">Cuprous oxidase</fullName>
    </alternativeName>
</protein>
<dbReference type="EC" id="1.16.3.4" evidence="1"/>
<dbReference type="EMBL" id="AL590842">
    <property type="protein sequence ID" value="CAL21998.1"/>
    <property type="molecule type" value="Genomic_DNA"/>
</dbReference>
<dbReference type="EMBL" id="AE009952">
    <property type="protein sequence ID" value="AAM84364.1"/>
    <property type="status" value="ALT_INIT"/>
    <property type="molecule type" value="Genomic_DNA"/>
</dbReference>
<dbReference type="EMBL" id="AE017042">
    <property type="protein sequence ID" value="AAS60552.1"/>
    <property type="status" value="ALT_INIT"/>
    <property type="molecule type" value="Genomic_DNA"/>
</dbReference>
<dbReference type="PIR" id="AC0414">
    <property type="entry name" value="AC0414"/>
</dbReference>
<dbReference type="RefSeq" id="WP_002209340.1">
    <property type="nucleotide sequence ID" value="NZ_WUCM01000008.1"/>
</dbReference>
<dbReference type="RefSeq" id="YP_002348301.1">
    <property type="nucleotide sequence ID" value="NC_003143.1"/>
</dbReference>
<dbReference type="SMR" id="Q8ZBK0"/>
<dbReference type="IntAct" id="Q8ZBK0">
    <property type="interactions" value="2"/>
</dbReference>
<dbReference type="STRING" id="214092.YPO3409"/>
<dbReference type="PaxDb" id="214092-YPO3409"/>
<dbReference type="EnsemblBacteria" id="AAS60552">
    <property type="protein sequence ID" value="AAS60552"/>
    <property type="gene ID" value="YP_0276"/>
</dbReference>
<dbReference type="GeneID" id="57975300"/>
<dbReference type="KEGG" id="ype:YPO3409"/>
<dbReference type="KEGG" id="ypk:y0777"/>
<dbReference type="KEGG" id="ypm:YP_0276"/>
<dbReference type="PATRIC" id="fig|214092.21.peg.3895"/>
<dbReference type="eggNOG" id="COG2132">
    <property type="taxonomic scope" value="Bacteria"/>
</dbReference>
<dbReference type="HOGENOM" id="CLU_009100_2_4_6"/>
<dbReference type="OMA" id="YQLDVMS"/>
<dbReference type="OrthoDB" id="9757546at2"/>
<dbReference type="Proteomes" id="UP000000815">
    <property type="component" value="Chromosome"/>
</dbReference>
<dbReference type="Proteomes" id="UP000001019">
    <property type="component" value="Chromosome"/>
</dbReference>
<dbReference type="Proteomes" id="UP000002490">
    <property type="component" value="Chromosome"/>
</dbReference>
<dbReference type="GO" id="GO:0030288">
    <property type="term" value="C:outer membrane-bounded periplasmic space"/>
    <property type="evidence" value="ECO:0000318"/>
    <property type="project" value="GO_Central"/>
</dbReference>
<dbReference type="GO" id="GO:0005507">
    <property type="term" value="F:copper ion binding"/>
    <property type="evidence" value="ECO:0007669"/>
    <property type="project" value="InterPro"/>
</dbReference>
<dbReference type="GO" id="GO:0004322">
    <property type="term" value="F:ferroxidase activity"/>
    <property type="evidence" value="ECO:0000318"/>
    <property type="project" value="GO_Central"/>
</dbReference>
<dbReference type="CDD" id="cd04232">
    <property type="entry name" value="CuRO_1_CueO_FtsP"/>
    <property type="match status" value="1"/>
</dbReference>
<dbReference type="CDD" id="cd13867">
    <property type="entry name" value="CuRO_2_CueO_FtsP"/>
    <property type="match status" value="1"/>
</dbReference>
<dbReference type="CDD" id="cd13890">
    <property type="entry name" value="CuRO_3_CueO_FtsP"/>
    <property type="match status" value="1"/>
</dbReference>
<dbReference type="Gene3D" id="2.60.40.420">
    <property type="entry name" value="Cupredoxins - blue copper proteins"/>
    <property type="match status" value="3"/>
</dbReference>
<dbReference type="InterPro" id="IPR011707">
    <property type="entry name" value="Cu-oxidase-like_N"/>
</dbReference>
<dbReference type="InterPro" id="IPR001117">
    <property type="entry name" value="Cu-oxidase_2nd"/>
</dbReference>
<dbReference type="InterPro" id="IPR011706">
    <property type="entry name" value="Cu-oxidase_C"/>
</dbReference>
<dbReference type="InterPro" id="IPR045087">
    <property type="entry name" value="Cu-oxidase_fam"/>
</dbReference>
<dbReference type="InterPro" id="IPR002355">
    <property type="entry name" value="Cu_oxidase_Cu_BS"/>
</dbReference>
<dbReference type="InterPro" id="IPR008972">
    <property type="entry name" value="Cupredoxin"/>
</dbReference>
<dbReference type="InterPro" id="IPR006311">
    <property type="entry name" value="TAT_signal"/>
</dbReference>
<dbReference type="InterPro" id="IPR019546">
    <property type="entry name" value="TAT_signal_bac_arc"/>
</dbReference>
<dbReference type="NCBIfam" id="NF008205">
    <property type="entry name" value="PRK10965.1"/>
    <property type="match status" value="1"/>
</dbReference>
<dbReference type="PANTHER" id="PTHR48267:SF1">
    <property type="entry name" value="BILIRUBIN OXIDASE"/>
    <property type="match status" value="1"/>
</dbReference>
<dbReference type="PANTHER" id="PTHR48267">
    <property type="entry name" value="CUPREDOXIN SUPERFAMILY PROTEIN"/>
    <property type="match status" value="1"/>
</dbReference>
<dbReference type="Pfam" id="PF00394">
    <property type="entry name" value="Cu-oxidase"/>
    <property type="match status" value="1"/>
</dbReference>
<dbReference type="Pfam" id="PF07731">
    <property type="entry name" value="Cu-oxidase_2"/>
    <property type="match status" value="1"/>
</dbReference>
<dbReference type="Pfam" id="PF07732">
    <property type="entry name" value="Cu-oxidase_3"/>
    <property type="match status" value="1"/>
</dbReference>
<dbReference type="Pfam" id="PF10518">
    <property type="entry name" value="TAT_signal"/>
    <property type="match status" value="1"/>
</dbReference>
<dbReference type="SUPFAM" id="SSF49503">
    <property type="entry name" value="Cupredoxins"/>
    <property type="match status" value="3"/>
</dbReference>
<dbReference type="PROSITE" id="PS00080">
    <property type="entry name" value="MULTICOPPER_OXIDASE2"/>
    <property type="match status" value="1"/>
</dbReference>
<dbReference type="PROSITE" id="PS51318">
    <property type="entry name" value="TAT"/>
    <property type="match status" value="1"/>
</dbReference>
<proteinExistence type="inferred from homology"/>
<name>CUEO_YERPE</name>
<comment type="function">
    <text evidence="1">Multicopper oxidase involved in copper homeostasis and copper tolerance under aerobic conditions. Is responsible for the oxidation of Cu(+) to the less harmful Cu(2+) in the periplasm, thereby preventing Cu(+) from entering the cytoplasm.</text>
</comment>
<comment type="catalytic activity">
    <reaction evidence="1">
        <text>4 Cu(+) + O2 + 4 H(+) = 4 Cu(2+) + 2 H2O</text>
        <dbReference type="Rhea" id="RHEA:30083"/>
        <dbReference type="ChEBI" id="CHEBI:15377"/>
        <dbReference type="ChEBI" id="CHEBI:15378"/>
        <dbReference type="ChEBI" id="CHEBI:15379"/>
        <dbReference type="ChEBI" id="CHEBI:29036"/>
        <dbReference type="ChEBI" id="CHEBI:49552"/>
        <dbReference type="EC" id="1.16.3.4"/>
    </reaction>
    <physiologicalReaction direction="left-to-right" evidence="1">
        <dbReference type="Rhea" id="RHEA:30084"/>
    </physiologicalReaction>
</comment>
<comment type="cofactor">
    <cofactor evidence="1">
        <name>Cu cation</name>
        <dbReference type="ChEBI" id="CHEBI:23378"/>
    </cofactor>
    <text evidence="1">Binds 4 Cu cations per monomer.</text>
</comment>
<comment type="subunit">
    <text evidence="1">Monomer.</text>
</comment>
<comment type="subcellular location">
    <subcellularLocation>
        <location evidence="1">Periplasm</location>
    </subcellularLocation>
</comment>
<comment type="PTM">
    <text evidence="3">Predicted to be exported by the Tat system. The position of the signal peptide cleavage has not been experimentally proven.</text>
</comment>
<comment type="similarity">
    <text evidence="4">Belongs to the multicopper oxidase family.</text>
</comment>
<comment type="sequence caution" evidence="4">
    <conflict type="erroneous initiation">
        <sequence resource="EMBL-CDS" id="AAM84364"/>
    </conflict>
</comment>
<comment type="sequence caution" evidence="4">
    <conflict type="erroneous initiation">
        <sequence resource="EMBL-CDS" id="AAS60552"/>
    </conflict>
</comment>
<evidence type="ECO:0000250" key="1">
    <source>
        <dbReference type="UniProtKB" id="P36649"/>
    </source>
</evidence>
<evidence type="ECO:0000255" key="2"/>
<evidence type="ECO:0000255" key="3">
    <source>
        <dbReference type="PROSITE-ProRule" id="PRU00648"/>
    </source>
</evidence>
<evidence type="ECO:0000305" key="4"/>